<sequence>MIRISDAAQAHFAKLLANQEEGTQIRVFVINPGTPNAECGVSYCPPDAVEATDTALKFDLLTAYVDELSAPYLEDAEIDFVTDQLGSQLTLKAPNAKMRKVADDAPLMERVEYMLQSQINPQLAGHGGRVSLMEITEDGYAILQFGGGCNGCSMVDVTLKEGIEKQLLNEFPELKGVRDLTEHQRGEHSYY</sequence>
<gene>
    <name evidence="1" type="primary">nfuA</name>
    <name type="ordered locus">EcE24377A_3889</name>
</gene>
<comment type="function">
    <text evidence="1">Involved in iron-sulfur cluster biogenesis. Binds a 4Fe-4S cluster, can transfer this cluster to apoproteins, and thereby intervenes in the maturation of Fe/S proteins. Could also act as a scaffold/chaperone for damaged Fe/S proteins.</text>
</comment>
<comment type="cofactor">
    <cofactor evidence="1">
        <name>[4Fe-4S] cluster</name>
        <dbReference type="ChEBI" id="CHEBI:49883"/>
    </cofactor>
    <text evidence="1">Binds 1 [4Fe-4S] cluster per subunit. The cluster is presumably bound at the interface of two monomers.</text>
</comment>
<comment type="subunit">
    <text evidence="1">Homodimer.</text>
</comment>
<comment type="similarity">
    <text evidence="1">Belongs to the NfuA family.</text>
</comment>
<feature type="chain" id="PRO_1000069867" description="Fe/S biogenesis protein NfuA">
    <location>
        <begin position="1"/>
        <end position="191"/>
    </location>
</feature>
<feature type="binding site" evidence="1">
    <location>
        <position position="149"/>
    </location>
    <ligand>
        <name>[4Fe-4S] cluster</name>
        <dbReference type="ChEBI" id="CHEBI:49883"/>
    </ligand>
</feature>
<feature type="binding site" evidence="1">
    <location>
        <position position="152"/>
    </location>
    <ligand>
        <name>[4Fe-4S] cluster</name>
        <dbReference type="ChEBI" id="CHEBI:49883"/>
    </ligand>
</feature>
<dbReference type="EMBL" id="CP000800">
    <property type="protein sequence ID" value="ABV17468.1"/>
    <property type="molecule type" value="Genomic_DNA"/>
</dbReference>
<dbReference type="RefSeq" id="WP_000619389.1">
    <property type="nucleotide sequence ID" value="NC_009801.1"/>
</dbReference>
<dbReference type="SMR" id="A7ZSU3"/>
<dbReference type="GeneID" id="93778582"/>
<dbReference type="KEGG" id="ecw:EcE24377A_3889"/>
<dbReference type="HOGENOM" id="CLU_094569_0_0_6"/>
<dbReference type="Proteomes" id="UP000001122">
    <property type="component" value="Chromosome"/>
</dbReference>
<dbReference type="GO" id="GO:0051539">
    <property type="term" value="F:4 iron, 4 sulfur cluster binding"/>
    <property type="evidence" value="ECO:0007669"/>
    <property type="project" value="UniProtKB-UniRule"/>
</dbReference>
<dbReference type="GO" id="GO:0005506">
    <property type="term" value="F:iron ion binding"/>
    <property type="evidence" value="ECO:0007669"/>
    <property type="project" value="InterPro"/>
</dbReference>
<dbReference type="GO" id="GO:0016226">
    <property type="term" value="P:iron-sulfur cluster assembly"/>
    <property type="evidence" value="ECO:0007669"/>
    <property type="project" value="UniProtKB-UniRule"/>
</dbReference>
<dbReference type="GO" id="GO:0051604">
    <property type="term" value="P:protein maturation"/>
    <property type="evidence" value="ECO:0007669"/>
    <property type="project" value="UniProtKB-UniRule"/>
</dbReference>
<dbReference type="FunFam" id="2.60.300.12:FF:000004">
    <property type="entry name" value="Fe/S biogenesis protein NfuA"/>
    <property type="match status" value="1"/>
</dbReference>
<dbReference type="FunFam" id="3.30.300.130:FF:000002">
    <property type="entry name" value="Fe/S biogenesis protein NfuA"/>
    <property type="match status" value="1"/>
</dbReference>
<dbReference type="Gene3D" id="3.30.300.130">
    <property type="entry name" value="Fe-S cluster assembly (FSCA)"/>
    <property type="match status" value="1"/>
</dbReference>
<dbReference type="Gene3D" id="2.60.300.12">
    <property type="entry name" value="HesB-like domain"/>
    <property type="match status" value="1"/>
</dbReference>
<dbReference type="HAMAP" id="MF_01637">
    <property type="entry name" value="Fe_S_biogen_NfuA"/>
    <property type="match status" value="1"/>
</dbReference>
<dbReference type="InterPro" id="IPR017726">
    <property type="entry name" value="Fe/S_biogenesis_protein_NfuA"/>
</dbReference>
<dbReference type="InterPro" id="IPR000361">
    <property type="entry name" value="FeS_biogenesis"/>
</dbReference>
<dbReference type="InterPro" id="IPR034904">
    <property type="entry name" value="FSCA_dom_sf"/>
</dbReference>
<dbReference type="InterPro" id="IPR035903">
    <property type="entry name" value="HesB-like_dom_sf"/>
</dbReference>
<dbReference type="InterPro" id="IPR001075">
    <property type="entry name" value="NIF_FeS_clus_asmbl_NifU_C"/>
</dbReference>
<dbReference type="NCBIfam" id="NF008392">
    <property type="entry name" value="PRK11190.1"/>
    <property type="match status" value="1"/>
</dbReference>
<dbReference type="NCBIfam" id="TIGR03341">
    <property type="entry name" value="YhgI_GntY"/>
    <property type="match status" value="1"/>
</dbReference>
<dbReference type="PANTHER" id="PTHR11178:SF51">
    <property type="entry name" value="FE_S BIOGENESIS PROTEIN NFUA"/>
    <property type="match status" value="1"/>
</dbReference>
<dbReference type="PANTHER" id="PTHR11178">
    <property type="entry name" value="IRON-SULFUR CLUSTER SCAFFOLD PROTEIN NFU-RELATED"/>
    <property type="match status" value="1"/>
</dbReference>
<dbReference type="Pfam" id="PF01521">
    <property type="entry name" value="Fe-S_biosyn"/>
    <property type="match status" value="1"/>
</dbReference>
<dbReference type="Pfam" id="PF01106">
    <property type="entry name" value="NifU"/>
    <property type="match status" value="1"/>
</dbReference>
<dbReference type="SUPFAM" id="SSF117916">
    <property type="entry name" value="Fe-S cluster assembly (FSCA) domain-like"/>
    <property type="match status" value="1"/>
</dbReference>
<dbReference type="SUPFAM" id="SSF89360">
    <property type="entry name" value="HesB-like domain"/>
    <property type="match status" value="1"/>
</dbReference>
<organism>
    <name type="scientific">Escherichia coli O139:H28 (strain E24377A / ETEC)</name>
    <dbReference type="NCBI Taxonomy" id="331111"/>
    <lineage>
        <taxon>Bacteria</taxon>
        <taxon>Pseudomonadati</taxon>
        <taxon>Pseudomonadota</taxon>
        <taxon>Gammaproteobacteria</taxon>
        <taxon>Enterobacterales</taxon>
        <taxon>Enterobacteriaceae</taxon>
        <taxon>Escherichia</taxon>
    </lineage>
</organism>
<evidence type="ECO:0000255" key="1">
    <source>
        <dbReference type="HAMAP-Rule" id="MF_01637"/>
    </source>
</evidence>
<name>NFUA_ECO24</name>
<protein>
    <recommendedName>
        <fullName evidence="1">Fe/S biogenesis protein NfuA</fullName>
    </recommendedName>
</protein>
<accession>A7ZSU3</accession>
<keyword id="KW-0004">4Fe-4S</keyword>
<keyword id="KW-0408">Iron</keyword>
<keyword id="KW-0411">Iron-sulfur</keyword>
<keyword id="KW-0479">Metal-binding</keyword>
<keyword id="KW-1185">Reference proteome</keyword>
<reference key="1">
    <citation type="journal article" date="2008" name="J. Bacteriol.">
        <title>The pangenome structure of Escherichia coli: comparative genomic analysis of E. coli commensal and pathogenic isolates.</title>
        <authorList>
            <person name="Rasko D.A."/>
            <person name="Rosovitz M.J."/>
            <person name="Myers G.S.A."/>
            <person name="Mongodin E.F."/>
            <person name="Fricke W.F."/>
            <person name="Gajer P."/>
            <person name="Crabtree J."/>
            <person name="Sebaihia M."/>
            <person name="Thomson N.R."/>
            <person name="Chaudhuri R."/>
            <person name="Henderson I.R."/>
            <person name="Sperandio V."/>
            <person name="Ravel J."/>
        </authorList>
    </citation>
    <scope>NUCLEOTIDE SEQUENCE [LARGE SCALE GENOMIC DNA]</scope>
    <source>
        <strain>E24377A / ETEC</strain>
    </source>
</reference>
<proteinExistence type="inferred from homology"/>